<organism>
    <name type="scientific">Arabidopsis thaliana</name>
    <name type="common">Mouse-ear cress</name>
    <dbReference type="NCBI Taxonomy" id="3702"/>
    <lineage>
        <taxon>Eukaryota</taxon>
        <taxon>Viridiplantae</taxon>
        <taxon>Streptophyta</taxon>
        <taxon>Embryophyta</taxon>
        <taxon>Tracheophyta</taxon>
        <taxon>Spermatophyta</taxon>
        <taxon>Magnoliopsida</taxon>
        <taxon>eudicotyledons</taxon>
        <taxon>Gunneridae</taxon>
        <taxon>Pentapetalae</taxon>
        <taxon>rosids</taxon>
        <taxon>malvids</taxon>
        <taxon>Brassicales</taxon>
        <taxon>Brassicaceae</taxon>
        <taxon>Camelineae</taxon>
        <taxon>Arabidopsis</taxon>
    </lineage>
</organism>
<dbReference type="EC" id="4.1.1.35"/>
<dbReference type="EMBL" id="AL133298">
    <property type="protein sequence ID" value="CAB62035.1"/>
    <property type="molecule type" value="Genomic_DNA"/>
</dbReference>
<dbReference type="EMBL" id="CP002686">
    <property type="protein sequence ID" value="AEE78158.1"/>
    <property type="molecule type" value="Genomic_DNA"/>
</dbReference>
<dbReference type="EMBL" id="CP002686">
    <property type="protein sequence ID" value="AEE78159.1"/>
    <property type="molecule type" value="Genomic_DNA"/>
</dbReference>
<dbReference type="EMBL" id="AY072098">
    <property type="protein sequence ID" value="AAL59920.1"/>
    <property type="molecule type" value="mRNA"/>
</dbReference>
<dbReference type="EMBL" id="AY096586">
    <property type="protein sequence ID" value="AAM20236.1"/>
    <property type="molecule type" value="mRNA"/>
</dbReference>
<dbReference type="EMBL" id="AK228600">
    <property type="protein sequence ID" value="BAF00515.1"/>
    <property type="molecule type" value="mRNA"/>
</dbReference>
<dbReference type="EMBL" id="AK317497">
    <property type="protein sequence ID" value="BAH20162.1"/>
    <property type="molecule type" value="mRNA"/>
</dbReference>
<dbReference type="EMBL" id="AY087118">
    <property type="protein sequence ID" value="AAM64676.1"/>
    <property type="molecule type" value="mRNA"/>
</dbReference>
<dbReference type="PIR" id="T45701">
    <property type="entry name" value="T45701"/>
</dbReference>
<dbReference type="RefSeq" id="NP_001030820.1">
    <property type="nucleotide sequence ID" value="NM_001035743.2"/>
</dbReference>
<dbReference type="RefSeq" id="NP_190228.1">
    <property type="nucleotide sequence ID" value="NM_114511.4"/>
</dbReference>
<dbReference type="SMR" id="Q9SN95"/>
<dbReference type="BioGRID" id="9114">
    <property type="interactions" value="2"/>
</dbReference>
<dbReference type="FunCoup" id="Q9SN95">
    <property type="interactions" value="3211"/>
</dbReference>
<dbReference type="STRING" id="3702.Q9SN95"/>
<dbReference type="iPTMnet" id="Q9SN95"/>
<dbReference type="PaxDb" id="3702-AT3G46440.2"/>
<dbReference type="ProteomicsDB" id="243244"/>
<dbReference type="EnsemblPlants" id="AT3G46440.1">
    <property type="protein sequence ID" value="AT3G46440.1"/>
    <property type="gene ID" value="AT3G46440"/>
</dbReference>
<dbReference type="EnsemblPlants" id="AT3G46440.2">
    <property type="protein sequence ID" value="AT3G46440.2"/>
    <property type="gene ID" value="AT3G46440"/>
</dbReference>
<dbReference type="GeneID" id="823794"/>
<dbReference type="Gramene" id="AT3G46440.1">
    <property type="protein sequence ID" value="AT3G46440.1"/>
    <property type="gene ID" value="AT3G46440"/>
</dbReference>
<dbReference type="Gramene" id="AT3G46440.2">
    <property type="protein sequence ID" value="AT3G46440.2"/>
    <property type="gene ID" value="AT3G46440"/>
</dbReference>
<dbReference type="KEGG" id="ath:AT3G46440"/>
<dbReference type="Araport" id="AT3G46440"/>
<dbReference type="TAIR" id="AT3G46440">
    <property type="gene designation" value="UXS5"/>
</dbReference>
<dbReference type="eggNOG" id="KOG1429">
    <property type="taxonomic scope" value="Eukaryota"/>
</dbReference>
<dbReference type="HOGENOM" id="CLU_007383_4_0_1"/>
<dbReference type="InParanoid" id="Q9SN95"/>
<dbReference type="OMA" id="KYPKVKY"/>
<dbReference type="OrthoDB" id="331544at2759"/>
<dbReference type="PhylomeDB" id="Q9SN95"/>
<dbReference type="BioCyc" id="ARA:AT3G46440-MONOMER"/>
<dbReference type="BRENDA" id="4.1.1.35">
    <property type="organism ID" value="399"/>
</dbReference>
<dbReference type="UniPathway" id="UPA00796">
    <property type="reaction ID" value="UER00771"/>
</dbReference>
<dbReference type="PRO" id="PR:Q9SN95"/>
<dbReference type="Proteomes" id="UP000006548">
    <property type="component" value="Chromosome 3"/>
</dbReference>
<dbReference type="ExpressionAtlas" id="Q9SN95">
    <property type="expression patterns" value="baseline and differential"/>
</dbReference>
<dbReference type="GO" id="GO:0009507">
    <property type="term" value="C:chloroplast"/>
    <property type="evidence" value="ECO:0007005"/>
    <property type="project" value="TAIR"/>
</dbReference>
<dbReference type="GO" id="GO:0005737">
    <property type="term" value="C:cytoplasm"/>
    <property type="evidence" value="ECO:0000314"/>
    <property type="project" value="TAIR"/>
</dbReference>
<dbReference type="GO" id="GO:0005829">
    <property type="term" value="C:cytosol"/>
    <property type="evidence" value="ECO:0007005"/>
    <property type="project" value="TAIR"/>
</dbReference>
<dbReference type="GO" id="GO:0070403">
    <property type="term" value="F:NAD+ binding"/>
    <property type="evidence" value="ECO:0007669"/>
    <property type="project" value="InterPro"/>
</dbReference>
<dbReference type="GO" id="GO:0048040">
    <property type="term" value="F:UDP-glucuronate decarboxylase activity"/>
    <property type="evidence" value="ECO:0000314"/>
    <property type="project" value="TAIR"/>
</dbReference>
<dbReference type="GO" id="GO:0042732">
    <property type="term" value="P:D-xylose metabolic process"/>
    <property type="evidence" value="ECO:0000304"/>
    <property type="project" value="TAIR"/>
</dbReference>
<dbReference type="GO" id="GO:0033320">
    <property type="term" value="P:UDP-D-xylose biosynthetic process"/>
    <property type="evidence" value="ECO:0007669"/>
    <property type="project" value="UniProtKB-UniPathway"/>
</dbReference>
<dbReference type="GO" id="GO:0045492">
    <property type="term" value="P:xylan biosynthetic process"/>
    <property type="evidence" value="ECO:0000316"/>
    <property type="project" value="TAIR"/>
</dbReference>
<dbReference type="CDD" id="cd05230">
    <property type="entry name" value="UGD_SDR_e"/>
    <property type="match status" value="1"/>
</dbReference>
<dbReference type="FunFam" id="3.40.50.720:FF:000150">
    <property type="entry name" value="UDP-glucuronic acid decarboxylase 6"/>
    <property type="match status" value="1"/>
</dbReference>
<dbReference type="Gene3D" id="3.40.50.720">
    <property type="entry name" value="NAD(P)-binding Rossmann-like Domain"/>
    <property type="match status" value="1"/>
</dbReference>
<dbReference type="InterPro" id="IPR016040">
    <property type="entry name" value="NAD(P)-bd_dom"/>
</dbReference>
<dbReference type="InterPro" id="IPR036291">
    <property type="entry name" value="NAD(P)-bd_dom_sf"/>
</dbReference>
<dbReference type="InterPro" id="IPR044516">
    <property type="entry name" value="UXS-like"/>
</dbReference>
<dbReference type="PANTHER" id="PTHR43078:SF49">
    <property type="entry name" value="UDP-GLUCURONIC ACID DECARBOXYLASE 3-RELATED"/>
    <property type="match status" value="1"/>
</dbReference>
<dbReference type="PANTHER" id="PTHR43078">
    <property type="entry name" value="UDP-GLUCURONIC ACID DECARBOXYLASE-RELATED"/>
    <property type="match status" value="1"/>
</dbReference>
<dbReference type="Pfam" id="PF16363">
    <property type="entry name" value="GDP_Man_Dehyd"/>
    <property type="match status" value="1"/>
</dbReference>
<dbReference type="SUPFAM" id="SSF51735">
    <property type="entry name" value="NAD(P)-binding Rossmann-fold domains"/>
    <property type="match status" value="1"/>
</dbReference>
<sequence length="341" mass="38389">MASSDKQTSPKPPPSPSPLRNSKFCQSNMRILISGGAGFIGSHLVDKLMENEKNEVIVADNYFTGSKDNLKKWIGHPRFELIRHDVTEPLLIEVDQIYHLACPASPIFYKYNPVKTIKTNVIGTLNMLGLAKRVGARILLTSTSEVYGDPLIHPQPESYWGNVNPIGVRSCYDEGKRVAETLMFDYHRQHGIEIRIARIFNTYGPRMNIDDGRVVSNFIAQALRGEALTVQKPGTQTRSFCYVSDMVDGLMRLMEGDDTGPINIGNPGEFTMVELAETVKELINPSIEIKMVENTPDDPRQRKPDITKAKEVLGWEPKVKLREGLPLMEEDFRLRLGVHKN</sequence>
<name>UXS5_ARATH</name>
<gene>
    <name type="primary">UXS5</name>
    <name type="ordered locus">At3g46440</name>
    <name type="ORF">F18L15.160</name>
</gene>
<proteinExistence type="evidence at transcript level"/>
<accession>Q9SN95</accession>
<reference key="1">
    <citation type="journal article" date="2000" name="Nature">
        <title>Sequence and analysis of chromosome 3 of the plant Arabidopsis thaliana.</title>
        <authorList>
            <person name="Salanoubat M."/>
            <person name="Lemcke K."/>
            <person name="Rieger M."/>
            <person name="Ansorge W."/>
            <person name="Unseld M."/>
            <person name="Fartmann B."/>
            <person name="Valle G."/>
            <person name="Bloecker H."/>
            <person name="Perez-Alonso M."/>
            <person name="Obermaier B."/>
            <person name="Delseny M."/>
            <person name="Boutry M."/>
            <person name="Grivell L.A."/>
            <person name="Mache R."/>
            <person name="Puigdomenech P."/>
            <person name="De Simone V."/>
            <person name="Choisne N."/>
            <person name="Artiguenave F."/>
            <person name="Robert C."/>
            <person name="Brottier P."/>
            <person name="Wincker P."/>
            <person name="Cattolico L."/>
            <person name="Weissenbach J."/>
            <person name="Saurin W."/>
            <person name="Quetier F."/>
            <person name="Schaefer M."/>
            <person name="Mueller-Auer S."/>
            <person name="Gabel C."/>
            <person name="Fuchs M."/>
            <person name="Benes V."/>
            <person name="Wurmbach E."/>
            <person name="Drzonek H."/>
            <person name="Erfle H."/>
            <person name="Jordan N."/>
            <person name="Bangert S."/>
            <person name="Wiedelmann R."/>
            <person name="Kranz H."/>
            <person name="Voss H."/>
            <person name="Holland R."/>
            <person name="Brandt P."/>
            <person name="Nyakatura G."/>
            <person name="Vezzi A."/>
            <person name="D'Angelo M."/>
            <person name="Pallavicini A."/>
            <person name="Toppo S."/>
            <person name="Simionati B."/>
            <person name="Conrad A."/>
            <person name="Hornischer K."/>
            <person name="Kauer G."/>
            <person name="Loehnert T.-H."/>
            <person name="Nordsiek G."/>
            <person name="Reichelt J."/>
            <person name="Scharfe M."/>
            <person name="Schoen O."/>
            <person name="Bargues M."/>
            <person name="Terol J."/>
            <person name="Climent J."/>
            <person name="Navarro P."/>
            <person name="Collado C."/>
            <person name="Perez-Perez A."/>
            <person name="Ottenwaelder B."/>
            <person name="Duchemin D."/>
            <person name="Cooke R."/>
            <person name="Laudie M."/>
            <person name="Berger-Llauro C."/>
            <person name="Purnelle B."/>
            <person name="Masuy D."/>
            <person name="de Haan M."/>
            <person name="Maarse A.C."/>
            <person name="Alcaraz J.-P."/>
            <person name="Cottet A."/>
            <person name="Casacuberta E."/>
            <person name="Monfort A."/>
            <person name="Argiriou A."/>
            <person name="Flores M."/>
            <person name="Liguori R."/>
            <person name="Vitale D."/>
            <person name="Mannhaupt G."/>
            <person name="Haase D."/>
            <person name="Schoof H."/>
            <person name="Rudd S."/>
            <person name="Zaccaria P."/>
            <person name="Mewes H.-W."/>
            <person name="Mayer K.F.X."/>
            <person name="Kaul S."/>
            <person name="Town C.D."/>
            <person name="Koo H.L."/>
            <person name="Tallon L.J."/>
            <person name="Jenkins J."/>
            <person name="Rooney T."/>
            <person name="Rizzo M."/>
            <person name="Walts A."/>
            <person name="Utterback T."/>
            <person name="Fujii C.Y."/>
            <person name="Shea T.P."/>
            <person name="Creasy T.H."/>
            <person name="Haas B."/>
            <person name="Maiti R."/>
            <person name="Wu D."/>
            <person name="Peterson J."/>
            <person name="Van Aken S."/>
            <person name="Pai G."/>
            <person name="Militscher J."/>
            <person name="Sellers P."/>
            <person name="Gill J.E."/>
            <person name="Feldblyum T.V."/>
            <person name="Preuss D."/>
            <person name="Lin X."/>
            <person name="Nierman W.C."/>
            <person name="Salzberg S.L."/>
            <person name="White O."/>
            <person name="Venter J.C."/>
            <person name="Fraser C.M."/>
            <person name="Kaneko T."/>
            <person name="Nakamura Y."/>
            <person name="Sato S."/>
            <person name="Kato T."/>
            <person name="Asamizu E."/>
            <person name="Sasamoto S."/>
            <person name="Kimura T."/>
            <person name="Idesawa K."/>
            <person name="Kawashima K."/>
            <person name="Kishida Y."/>
            <person name="Kiyokawa C."/>
            <person name="Kohara M."/>
            <person name="Matsumoto M."/>
            <person name="Matsuno A."/>
            <person name="Muraki A."/>
            <person name="Nakayama S."/>
            <person name="Nakazaki N."/>
            <person name="Shinpo S."/>
            <person name="Takeuchi C."/>
            <person name="Wada T."/>
            <person name="Watanabe A."/>
            <person name="Yamada M."/>
            <person name="Yasuda M."/>
            <person name="Tabata S."/>
        </authorList>
    </citation>
    <scope>NUCLEOTIDE SEQUENCE [LARGE SCALE GENOMIC DNA]</scope>
    <source>
        <strain>cv. Columbia</strain>
    </source>
</reference>
<reference key="2">
    <citation type="journal article" date="2017" name="Plant J.">
        <title>Araport11: a complete reannotation of the Arabidopsis thaliana reference genome.</title>
        <authorList>
            <person name="Cheng C.Y."/>
            <person name="Krishnakumar V."/>
            <person name="Chan A.P."/>
            <person name="Thibaud-Nissen F."/>
            <person name="Schobel S."/>
            <person name="Town C.D."/>
        </authorList>
    </citation>
    <scope>GENOME REANNOTATION</scope>
    <source>
        <strain>cv. Columbia</strain>
    </source>
</reference>
<reference key="3">
    <citation type="journal article" date="2003" name="Science">
        <title>Empirical analysis of transcriptional activity in the Arabidopsis genome.</title>
        <authorList>
            <person name="Yamada K."/>
            <person name="Lim J."/>
            <person name="Dale J.M."/>
            <person name="Chen H."/>
            <person name="Shinn P."/>
            <person name="Palm C.J."/>
            <person name="Southwick A.M."/>
            <person name="Wu H.C."/>
            <person name="Kim C.J."/>
            <person name="Nguyen M."/>
            <person name="Pham P.K."/>
            <person name="Cheuk R.F."/>
            <person name="Karlin-Newmann G."/>
            <person name="Liu S.X."/>
            <person name="Lam B."/>
            <person name="Sakano H."/>
            <person name="Wu T."/>
            <person name="Yu G."/>
            <person name="Miranda M."/>
            <person name="Quach H.L."/>
            <person name="Tripp M."/>
            <person name="Chang C.H."/>
            <person name="Lee J.M."/>
            <person name="Toriumi M.J."/>
            <person name="Chan M.M."/>
            <person name="Tang C.C."/>
            <person name="Onodera C.S."/>
            <person name="Deng J.M."/>
            <person name="Akiyama K."/>
            <person name="Ansari Y."/>
            <person name="Arakawa T."/>
            <person name="Banh J."/>
            <person name="Banno F."/>
            <person name="Bowser L."/>
            <person name="Brooks S.Y."/>
            <person name="Carninci P."/>
            <person name="Chao Q."/>
            <person name="Choy N."/>
            <person name="Enju A."/>
            <person name="Goldsmith A.D."/>
            <person name="Gurjal M."/>
            <person name="Hansen N.F."/>
            <person name="Hayashizaki Y."/>
            <person name="Johnson-Hopson C."/>
            <person name="Hsuan V.W."/>
            <person name="Iida K."/>
            <person name="Karnes M."/>
            <person name="Khan S."/>
            <person name="Koesema E."/>
            <person name="Ishida J."/>
            <person name="Jiang P.X."/>
            <person name="Jones T."/>
            <person name="Kawai J."/>
            <person name="Kamiya A."/>
            <person name="Meyers C."/>
            <person name="Nakajima M."/>
            <person name="Narusaka M."/>
            <person name="Seki M."/>
            <person name="Sakurai T."/>
            <person name="Satou M."/>
            <person name="Tamse R."/>
            <person name="Vaysberg M."/>
            <person name="Wallender E.K."/>
            <person name="Wong C."/>
            <person name="Yamamura Y."/>
            <person name="Yuan S."/>
            <person name="Shinozaki K."/>
            <person name="Davis R.W."/>
            <person name="Theologis A."/>
            <person name="Ecker J.R."/>
        </authorList>
    </citation>
    <scope>NUCLEOTIDE SEQUENCE [LARGE SCALE MRNA]</scope>
    <source>
        <strain>cv. Columbia</strain>
    </source>
</reference>
<reference key="4">
    <citation type="submission" date="2006-07" db="EMBL/GenBank/DDBJ databases">
        <title>Large-scale analysis of RIKEN Arabidopsis full-length (RAFL) cDNAs.</title>
        <authorList>
            <person name="Totoki Y."/>
            <person name="Seki M."/>
            <person name="Ishida J."/>
            <person name="Nakajima M."/>
            <person name="Enju A."/>
            <person name="Kamiya A."/>
            <person name="Narusaka M."/>
            <person name="Shin-i T."/>
            <person name="Nakagawa M."/>
            <person name="Sakamoto N."/>
            <person name="Oishi K."/>
            <person name="Kohara Y."/>
            <person name="Kobayashi M."/>
            <person name="Toyoda A."/>
            <person name="Sakaki Y."/>
            <person name="Sakurai T."/>
            <person name="Iida K."/>
            <person name="Akiyama K."/>
            <person name="Satou M."/>
            <person name="Toyoda T."/>
            <person name="Konagaya A."/>
            <person name="Carninci P."/>
            <person name="Kawai J."/>
            <person name="Hayashizaki Y."/>
            <person name="Shinozaki K."/>
        </authorList>
    </citation>
    <scope>NUCLEOTIDE SEQUENCE [LARGE SCALE MRNA]</scope>
    <source>
        <strain>cv. Columbia</strain>
    </source>
</reference>
<reference key="5">
    <citation type="journal article" date="2009" name="DNA Res.">
        <title>Analysis of multiple occurrences of alternative splicing events in Arabidopsis thaliana using novel sequenced full-length cDNAs.</title>
        <authorList>
            <person name="Iida K."/>
            <person name="Fukami-Kobayashi K."/>
            <person name="Toyoda A."/>
            <person name="Sakaki Y."/>
            <person name="Kobayashi M."/>
            <person name="Seki M."/>
            <person name="Shinozaki K."/>
        </authorList>
    </citation>
    <scope>NUCLEOTIDE SEQUENCE [LARGE SCALE MRNA]</scope>
    <source>
        <strain>cv. Columbia</strain>
    </source>
</reference>
<reference key="6">
    <citation type="submission" date="2002-03" db="EMBL/GenBank/DDBJ databases">
        <title>Full-length cDNA from Arabidopsis thaliana.</title>
        <authorList>
            <person name="Brover V.V."/>
            <person name="Troukhan M.E."/>
            <person name="Alexandrov N.A."/>
            <person name="Lu Y.-P."/>
            <person name="Flavell R.B."/>
            <person name="Feldmann K.A."/>
        </authorList>
    </citation>
    <scope>NUCLEOTIDE SEQUENCE [LARGE SCALE MRNA]</scope>
</reference>
<reference key="7">
    <citation type="journal article" date="2002" name="Plant Physiol.">
        <title>Biosynthesis of UDP-xylose. Cloning and characterization of a novel Arabidopsis gene family, UXS, encoding soluble and putative membrane-bound UDP-glucuronic acid decarboxylase isoforms.</title>
        <authorList>
            <person name="Harper A.D."/>
            <person name="Bar-Peled M."/>
        </authorList>
    </citation>
    <scope>GENE FAMILY</scope>
</reference>
<comment type="function">
    <text evidence="1">Catalyzes the NAD-dependent decarboxylation of UDP-glucuronic acid to UDP-xylose. Necessary for the biosynthesis of the core tetrasaccharide in glycosaminoglycan biosynthesis (By similarity).</text>
</comment>
<comment type="catalytic activity">
    <reaction>
        <text>UDP-alpha-D-glucuronate + H(+) = UDP-alpha-D-xylose + CO2</text>
        <dbReference type="Rhea" id="RHEA:23916"/>
        <dbReference type="ChEBI" id="CHEBI:15378"/>
        <dbReference type="ChEBI" id="CHEBI:16526"/>
        <dbReference type="ChEBI" id="CHEBI:57632"/>
        <dbReference type="ChEBI" id="CHEBI:58052"/>
        <dbReference type="EC" id="4.1.1.35"/>
    </reaction>
</comment>
<comment type="cofactor">
    <cofactor evidence="1">
        <name>NAD(+)</name>
        <dbReference type="ChEBI" id="CHEBI:57540"/>
    </cofactor>
</comment>
<comment type="pathway">
    <text>Nucleotide-sugar biosynthesis; UDP-alpha-D-xylose biosynthesis; UDP-alpha-D-xylose from UDP-alpha-D-glucuronate: step 1/1.</text>
</comment>
<comment type="subcellular location">
    <subcellularLocation>
        <location evidence="1">Cytoplasm</location>
    </subcellularLocation>
</comment>
<comment type="similarity">
    <text evidence="3">Belongs to the NAD(P)-dependent epimerase/dehydratase family. UDP-glucuronic acid decarboxylase subfamily.</text>
</comment>
<protein>
    <recommendedName>
        <fullName>UDP-glucuronic acid decarboxylase 5</fullName>
        <ecNumber>4.1.1.35</ecNumber>
    </recommendedName>
    <alternativeName>
        <fullName>UDP-XYL synthase 5</fullName>
    </alternativeName>
    <alternativeName>
        <fullName>UDP-glucuronate decarboxylase 5</fullName>
        <shortName>UGD</shortName>
        <shortName>UXS-5</shortName>
    </alternativeName>
</protein>
<keyword id="KW-0963">Cytoplasm</keyword>
<keyword id="KW-0210">Decarboxylase</keyword>
<keyword id="KW-0456">Lyase</keyword>
<keyword id="KW-0520">NAD</keyword>
<keyword id="KW-1185">Reference proteome</keyword>
<feature type="chain" id="PRO_0000421986" description="UDP-glucuronic acid decarboxylase 5">
    <location>
        <begin position="1"/>
        <end position="341"/>
    </location>
</feature>
<feature type="region of interest" description="Disordered" evidence="2">
    <location>
        <begin position="1"/>
        <end position="21"/>
    </location>
</feature>
<feature type="active site" description="Proton acceptor" evidence="1">
    <location>
        <position position="172"/>
    </location>
</feature>
<feature type="binding site" evidence="1">
    <location>
        <begin position="60"/>
        <end position="85"/>
    </location>
    <ligand>
        <name>NAD(+)</name>
        <dbReference type="ChEBI" id="CHEBI:57540"/>
    </ligand>
</feature>
<feature type="binding site" evidence="1">
    <location>
        <position position="169"/>
    </location>
    <ligand>
        <name>substrate</name>
    </ligand>
</feature>
<feature type="binding site" evidence="1">
    <location>
        <begin position="172"/>
        <end position="176"/>
    </location>
    <ligand>
        <name>NAD(+)</name>
        <dbReference type="ChEBI" id="CHEBI:57540"/>
    </ligand>
</feature>
<feature type="binding site" evidence="1">
    <location>
        <position position="201"/>
    </location>
    <ligand>
        <name>substrate</name>
    </ligand>
</feature>
<feature type="binding site" evidence="1">
    <location>
        <position position="213"/>
    </location>
    <ligand>
        <name>NAD(+)</name>
        <dbReference type="ChEBI" id="CHEBI:57540"/>
    </ligand>
</feature>
<feature type="binding site" evidence="1">
    <location>
        <begin position="214"/>
        <end position="218"/>
    </location>
    <ligand>
        <name>substrate</name>
    </ligand>
</feature>
<feature type="binding site" evidence="1">
    <location>
        <begin position="231"/>
        <end position="238"/>
    </location>
    <ligand>
        <name>substrate</name>
    </ligand>
</feature>
<feature type="binding site" evidence="1">
    <location>
        <begin position="298"/>
        <end position="302"/>
    </location>
    <ligand>
        <name>substrate</name>
    </ligand>
</feature>
<evidence type="ECO:0000250" key="1"/>
<evidence type="ECO:0000256" key="2">
    <source>
        <dbReference type="SAM" id="MobiDB-lite"/>
    </source>
</evidence>
<evidence type="ECO:0000305" key="3"/>